<name>PSBI_OENPA</name>
<dbReference type="EMBL" id="EU262891">
    <property type="protein sequence ID" value="ABX10128.1"/>
    <property type="molecule type" value="Genomic_DNA"/>
</dbReference>
<dbReference type="RefSeq" id="YP_001687458.1">
    <property type="nucleotide sequence ID" value="NC_010362.1"/>
</dbReference>
<dbReference type="SMR" id="B0Z5D5"/>
<dbReference type="GeneID" id="5955390"/>
<dbReference type="GO" id="GO:0009535">
    <property type="term" value="C:chloroplast thylakoid membrane"/>
    <property type="evidence" value="ECO:0007669"/>
    <property type="project" value="UniProtKB-SubCell"/>
</dbReference>
<dbReference type="GO" id="GO:0009539">
    <property type="term" value="C:photosystem II reaction center"/>
    <property type="evidence" value="ECO:0007669"/>
    <property type="project" value="InterPro"/>
</dbReference>
<dbReference type="GO" id="GO:0015979">
    <property type="term" value="P:photosynthesis"/>
    <property type="evidence" value="ECO:0007669"/>
    <property type="project" value="UniProtKB-UniRule"/>
</dbReference>
<dbReference type="HAMAP" id="MF_01316">
    <property type="entry name" value="PSII_PsbI"/>
    <property type="match status" value="1"/>
</dbReference>
<dbReference type="InterPro" id="IPR003686">
    <property type="entry name" value="PSII_PsbI"/>
</dbReference>
<dbReference type="InterPro" id="IPR037271">
    <property type="entry name" value="PSII_PsbI_sf"/>
</dbReference>
<dbReference type="NCBIfam" id="NF002735">
    <property type="entry name" value="PRK02655.1"/>
    <property type="match status" value="1"/>
</dbReference>
<dbReference type="PANTHER" id="PTHR35772">
    <property type="entry name" value="PHOTOSYSTEM II REACTION CENTER PROTEIN I"/>
    <property type="match status" value="1"/>
</dbReference>
<dbReference type="PANTHER" id="PTHR35772:SF1">
    <property type="entry name" value="PHOTOSYSTEM II REACTION CENTER PROTEIN I"/>
    <property type="match status" value="1"/>
</dbReference>
<dbReference type="Pfam" id="PF02532">
    <property type="entry name" value="PsbI"/>
    <property type="match status" value="1"/>
</dbReference>
<dbReference type="SUPFAM" id="SSF161041">
    <property type="entry name" value="Photosystem II reaction center protein I, PsbI"/>
    <property type="match status" value="1"/>
</dbReference>
<comment type="function">
    <text evidence="1">One of the components of the core complex of photosystem II (PSII), required for its stability and/or assembly. PSII is a light-driven water:plastoquinone oxidoreductase that uses light energy to abstract electrons from H(2)O, generating O(2) and a proton gradient subsequently used for ATP formation. It consists of a core antenna complex that captures photons, and an electron transfer chain that converts photonic excitation into a charge separation.</text>
</comment>
<comment type="subunit">
    <text evidence="1">PSII is composed of 1 copy each of membrane proteins PsbA, PsbB, PsbC, PsbD, PsbE, PsbF, PsbH, PsbI, PsbJ, PsbK, PsbL, PsbM, PsbT, PsbX, PsbY, PsbZ, Psb30/Ycf12, at least 3 peripheral proteins of the oxygen-evolving complex and a large number of cofactors. It forms dimeric complexes.</text>
</comment>
<comment type="subcellular location">
    <subcellularLocation>
        <location evidence="1">Plastid</location>
        <location evidence="1">Chloroplast thylakoid membrane</location>
        <topology evidence="1">Single-pass membrane protein</topology>
    </subcellularLocation>
</comment>
<comment type="similarity">
    <text evidence="1">Belongs to the PsbI family.</text>
</comment>
<gene>
    <name evidence="1" type="primary">psbI</name>
</gene>
<geneLocation type="chloroplast"/>
<reference key="1">
    <citation type="journal article" date="2008" name="Nucleic Acids Res.">
        <title>The complete nucleotide sequences of the five genetically distinct plastid genomes of Oenothera, subsection Oenothera: I. Sequence evaluation and plastome evolution.</title>
        <authorList>
            <person name="Greiner S."/>
            <person name="Wang X."/>
            <person name="Rauwolf U."/>
            <person name="Silber M.V."/>
            <person name="Mayer K."/>
            <person name="Meurer J."/>
            <person name="Haberer G."/>
            <person name="Herrmann R.G."/>
        </authorList>
    </citation>
    <scope>NUCLEOTIDE SEQUENCE [LARGE SCALE GENOMIC DNA]</scope>
    <source>
        <strain>cv. Atrovirens</strain>
    </source>
</reference>
<evidence type="ECO:0000255" key="1">
    <source>
        <dbReference type="HAMAP-Rule" id="MF_01316"/>
    </source>
</evidence>
<organism>
    <name type="scientific">Oenothera parviflora</name>
    <name type="common">Small-flowered evening primrose</name>
    <name type="synonym">Oenothera cruciata</name>
    <dbReference type="NCBI Taxonomy" id="482429"/>
    <lineage>
        <taxon>Eukaryota</taxon>
        <taxon>Viridiplantae</taxon>
        <taxon>Streptophyta</taxon>
        <taxon>Embryophyta</taxon>
        <taxon>Tracheophyta</taxon>
        <taxon>Spermatophyta</taxon>
        <taxon>Magnoliopsida</taxon>
        <taxon>eudicotyledons</taxon>
        <taxon>Gunneridae</taxon>
        <taxon>Pentapetalae</taxon>
        <taxon>rosids</taxon>
        <taxon>malvids</taxon>
        <taxon>Myrtales</taxon>
        <taxon>Onagraceae</taxon>
        <taxon>Onagroideae</taxon>
        <taxon>Onagreae</taxon>
        <taxon>Oenothera</taxon>
    </lineage>
</organism>
<feature type="chain" id="PRO_0000353243" description="Photosystem II reaction center protein I">
    <location>
        <begin position="1"/>
        <end position="36"/>
    </location>
</feature>
<feature type="transmembrane region" description="Helical" evidence="1">
    <location>
        <begin position="4"/>
        <end position="24"/>
    </location>
</feature>
<proteinExistence type="inferred from homology"/>
<accession>B0Z5D5</accession>
<sequence>MLTLKLFVYTVVIFFVSLFIFGFLSNDPGRNPGREE</sequence>
<keyword id="KW-0150">Chloroplast</keyword>
<keyword id="KW-0472">Membrane</keyword>
<keyword id="KW-0602">Photosynthesis</keyword>
<keyword id="KW-0604">Photosystem II</keyword>
<keyword id="KW-0934">Plastid</keyword>
<keyword id="KW-0674">Reaction center</keyword>
<keyword id="KW-0793">Thylakoid</keyword>
<keyword id="KW-0812">Transmembrane</keyword>
<keyword id="KW-1133">Transmembrane helix</keyword>
<protein>
    <recommendedName>
        <fullName evidence="1">Photosystem II reaction center protein I</fullName>
        <shortName evidence="1">PSII-I</shortName>
    </recommendedName>
    <alternativeName>
        <fullName evidence="1">PSII 4.8 kDa protein</fullName>
    </alternativeName>
</protein>